<accession>B0SS68</accession>
<feature type="chain" id="PRO_1000115462" description="ATP-dependent Clp protease adapter protein ClpS">
    <location>
        <begin position="1"/>
        <end position="113"/>
    </location>
</feature>
<reference key="1">
    <citation type="journal article" date="2008" name="PLoS ONE">
        <title>Genome sequence of the saprophyte Leptospira biflexa provides insights into the evolution of Leptospira and the pathogenesis of leptospirosis.</title>
        <authorList>
            <person name="Picardeau M."/>
            <person name="Bulach D.M."/>
            <person name="Bouchier C."/>
            <person name="Zuerner R.L."/>
            <person name="Zidane N."/>
            <person name="Wilson P.J."/>
            <person name="Creno S."/>
            <person name="Kuczek E.S."/>
            <person name="Bommezzadri S."/>
            <person name="Davis J.C."/>
            <person name="McGrath A."/>
            <person name="Johnson M.J."/>
            <person name="Boursaux-Eude C."/>
            <person name="Seemann T."/>
            <person name="Rouy Z."/>
            <person name="Coppel R.L."/>
            <person name="Rood J.I."/>
            <person name="Lajus A."/>
            <person name="Davies J.K."/>
            <person name="Medigue C."/>
            <person name="Adler B."/>
        </authorList>
    </citation>
    <scope>NUCLEOTIDE SEQUENCE [LARGE SCALE GENOMIC DNA]</scope>
    <source>
        <strain>Patoc 1 / ATCC 23582 / Paris</strain>
    </source>
</reference>
<protein>
    <recommendedName>
        <fullName evidence="1">ATP-dependent Clp protease adapter protein ClpS</fullName>
    </recommendedName>
</protein>
<keyword id="KW-1185">Reference proteome</keyword>
<name>CLPS_LEPBP</name>
<organism>
    <name type="scientific">Leptospira biflexa serovar Patoc (strain Patoc 1 / ATCC 23582 / Paris)</name>
    <dbReference type="NCBI Taxonomy" id="456481"/>
    <lineage>
        <taxon>Bacteria</taxon>
        <taxon>Pseudomonadati</taxon>
        <taxon>Spirochaetota</taxon>
        <taxon>Spirochaetia</taxon>
        <taxon>Leptospirales</taxon>
        <taxon>Leptospiraceae</taxon>
        <taxon>Leptospira</taxon>
    </lineage>
</organism>
<sequence length="113" mass="13136">MSESNRKSYTDFNVELLEKEKQKKKLKKPDRYKVILINDDYTPQEFVVYVLAVVFRKSMDESRQIMWRAHTEGSAVCGVYSLDIARTKVAEVHKLADDAGHPLQCQLAKEEEE</sequence>
<gene>
    <name evidence="1" type="primary">clpS</name>
    <name type="ordered locus">LEPBI_I1853</name>
</gene>
<proteinExistence type="inferred from homology"/>
<evidence type="ECO:0000255" key="1">
    <source>
        <dbReference type="HAMAP-Rule" id="MF_00302"/>
    </source>
</evidence>
<dbReference type="EMBL" id="CP000786">
    <property type="protein sequence ID" value="ABZ97958.1"/>
    <property type="molecule type" value="Genomic_DNA"/>
</dbReference>
<dbReference type="RefSeq" id="WP_012388836.1">
    <property type="nucleotide sequence ID" value="NC_010602.1"/>
</dbReference>
<dbReference type="SMR" id="B0SS68"/>
<dbReference type="STRING" id="456481.LEPBI_I1853"/>
<dbReference type="KEGG" id="lbi:LEPBI_I1853"/>
<dbReference type="HOGENOM" id="CLU_134358_3_0_12"/>
<dbReference type="OrthoDB" id="9796121at2"/>
<dbReference type="BioCyc" id="LBIF456481:LEPBI_RS09155-MONOMER"/>
<dbReference type="Proteomes" id="UP000001847">
    <property type="component" value="Chromosome I"/>
</dbReference>
<dbReference type="GO" id="GO:0030163">
    <property type="term" value="P:protein catabolic process"/>
    <property type="evidence" value="ECO:0007669"/>
    <property type="project" value="InterPro"/>
</dbReference>
<dbReference type="GO" id="GO:0006508">
    <property type="term" value="P:proteolysis"/>
    <property type="evidence" value="ECO:0007669"/>
    <property type="project" value="UniProtKB-UniRule"/>
</dbReference>
<dbReference type="FunFam" id="3.30.1390.10:FF:000002">
    <property type="entry name" value="ATP-dependent Clp protease adapter protein ClpS"/>
    <property type="match status" value="1"/>
</dbReference>
<dbReference type="Gene3D" id="3.30.1390.10">
    <property type="match status" value="1"/>
</dbReference>
<dbReference type="HAMAP" id="MF_00302">
    <property type="entry name" value="ClpS"/>
    <property type="match status" value="1"/>
</dbReference>
<dbReference type="InterPro" id="IPR022935">
    <property type="entry name" value="ClpS"/>
</dbReference>
<dbReference type="InterPro" id="IPR003769">
    <property type="entry name" value="ClpS_core"/>
</dbReference>
<dbReference type="InterPro" id="IPR014719">
    <property type="entry name" value="Ribosomal_bL12_C/ClpS-like"/>
</dbReference>
<dbReference type="NCBIfam" id="NF000672">
    <property type="entry name" value="PRK00033.1-5"/>
    <property type="match status" value="1"/>
</dbReference>
<dbReference type="PANTHER" id="PTHR33473:SF19">
    <property type="entry name" value="ATP-DEPENDENT CLP PROTEASE ADAPTER PROTEIN CLPS"/>
    <property type="match status" value="1"/>
</dbReference>
<dbReference type="PANTHER" id="PTHR33473">
    <property type="entry name" value="ATP-DEPENDENT CLP PROTEASE ADAPTER PROTEIN CLPS1, CHLOROPLASTIC"/>
    <property type="match status" value="1"/>
</dbReference>
<dbReference type="Pfam" id="PF02617">
    <property type="entry name" value="ClpS"/>
    <property type="match status" value="1"/>
</dbReference>
<dbReference type="SUPFAM" id="SSF54736">
    <property type="entry name" value="ClpS-like"/>
    <property type="match status" value="1"/>
</dbReference>
<comment type="function">
    <text evidence="1">Involved in the modulation of the specificity of the ClpAP-mediated ATP-dependent protein degradation.</text>
</comment>
<comment type="subunit">
    <text evidence="1">Binds to the N-terminal domain of the chaperone ClpA.</text>
</comment>
<comment type="similarity">
    <text evidence="1">Belongs to the ClpS family.</text>
</comment>